<organism>
    <name type="scientific">Proteus vulgaris</name>
    <dbReference type="NCBI Taxonomy" id="585"/>
    <lineage>
        <taxon>Bacteria</taxon>
        <taxon>Pseudomonadati</taxon>
        <taxon>Pseudomonadota</taxon>
        <taxon>Gammaproteobacteria</taxon>
        <taxon>Enterobacterales</taxon>
        <taxon>Morganellaceae</taxon>
        <taxon>Proteus</taxon>
    </lineage>
</organism>
<evidence type="ECO:0000250" key="1"/>
<evidence type="ECO:0000255" key="2">
    <source>
        <dbReference type="PROSITE-ProRule" id="PRU10101"/>
    </source>
</evidence>
<evidence type="ECO:0000305" key="3"/>
<evidence type="ECO:0000305" key="4">
    <source>
    </source>
</evidence>
<protein>
    <recommendedName>
        <fullName>Beta-lactamase</fullName>
        <ecNumber>3.5.2.6</ecNumber>
    </recommendedName>
    <alternativeName>
        <fullName>Penicillinase</fullName>
    </alternativeName>
</protein>
<accession>P80298</accession>
<name>BLAC_PROVU</name>
<proteinExistence type="evidence at protein level"/>
<keyword id="KW-0046">Antibiotic resistance</keyword>
<keyword id="KW-0903">Direct protein sequencing</keyword>
<keyword id="KW-0378">Hydrolase</keyword>
<dbReference type="EC" id="3.5.2.6"/>
<dbReference type="PIR" id="S47620">
    <property type="entry name" value="S47620"/>
</dbReference>
<dbReference type="SMR" id="P80298"/>
<dbReference type="ChEMBL" id="CHEMBL4782"/>
<dbReference type="GO" id="GO:0008800">
    <property type="term" value="F:beta-lactamase activity"/>
    <property type="evidence" value="ECO:0007669"/>
    <property type="project" value="UniProtKB-EC"/>
</dbReference>
<dbReference type="GO" id="GO:0030655">
    <property type="term" value="P:beta-lactam antibiotic catabolic process"/>
    <property type="evidence" value="ECO:0007669"/>
    <property type="project" value="InterPro"/>
</dbReference>
<dbReference type="GO" id="GO:0046677">
    <property type="term" value="P:response to antibiotic"/>
    <property type="evidence" value="ECO:0007669"/>
    <property type="project" value="UniProtKB-KW"/>
</dbReference>
<dbReference type="Gene3D" id="3.40.710.10">
    <property type="entry name" value="DD-peptidase/beta-lactamase superfamily"/>
    <property type="match status" value="1"/>
</dbReference>
<dbReference type="InterPro" id="IPR012338">
    <property type="entry name" value="Beta-lactam/transpept-like"/>
</dbReference>
<dbReference type="InterPro" id="IPR045155">
    <property type="entry name" value="Beta-lactam_cat"/>
</dbReference>
<dbReference type="InterPro" id="IPR000871">
    <property type="entry name" value="Beta-lactam_class-A"/>
</dbReference>
<dbReference type="InterPro" id="IPR023650">
    <property type="entry name" value="Beta-lactam_class-A_AS"/>
</dbReference>
<dbReference type="NCBIfam" id="NF033103">
    <property type="entry name" value="bla_class_A"/>
    <property type="match status" value="1"/>
</dbReference>
<dbReference type="PANTHER" id="PTHR35333">
    <property type="entry name" value="BETA-LACTAMASE"/>
    <property type="match status" value="1"/>
</dbReference>
<dbReference type="PANTHER" id="PTHR35333:SF3">
    <property type="entry name" value="BETA-LACTAMASE-TYPE TRANSPEPTIDASE FOLD CONTAINING PROTEIN"/>
    <property type="match status" value="1"/>
</dbReference>
<dbReference type="Pfam" id="PF13354">
    <property type="entry name" value="Beta-lactamase2"/>
    <property type="match status" value="1"/>
</dbReference>
<dbReference type="PRINTS" id="PR00118">
    <property type="entry name" value="BLACTAMASEA"/>
</dbReference>
<dbReference type="SUPFAM" id="SSF56601">
    <property type="entry name" value="beta-lactamase/transpeptidase-like"/>
    <property type="match status" value="1"/>
</dbReference>
<dbReference type="PROSITE" id="PS00146">
    <property type="entry name" value="BETA_LACTAMASE_A"/>
    <property type="match status" value="1"/>
</dbReference>
<comment type="function">
    <text>Hydrolyzes broad-spectrum beta-lactam antibiotics. Active against cephalosporins.</text>
</comment>
<comment type="catalytic activity">
    <reaction evidence="2">
        <text>a beta-lactam + H2O = a substituted beta-amino acid</text>
        <dbReference type="Rhea" id="RHEA:20401"/>
        <dbReference type="ChEBI" id="CHEBI:15377"/>
        <dbReference type="ChEBI" id="CHEBI:35627"/>
        <dbReference type="ChEBI" id="CHEBI:140347"/>
        <dbReference type="EC" id="3.5.2.6"/>
    </reaction>
</comment>
<comment type="subunit">
    <text>Monomer.</text>
</comment>
<comment type="miscellaneous">
    <text evidence="4">The class A beta-lactamase family has a specific amino-acid numbering system, sometimes called Ambler or ABL numbering and often misspelt as Amber. A multiple sequence alignment was used to derive a consensus sequence and then the consensus was numbered taking into account insertions and deletions. This allows use of identical numbers, e.g. for active site residues, despite differences in protein length. UniProt always uses natural numbering of residues, hence there appear to be differences in numbering between this entry and some papers.</text>
</comment>
<comment type="similarity">
    <text evidence="3">Belongs to the class-A beta-lactamase family.</text>
</comment>
<sequence length="271" mass="29803">NTNNTIEEQLSTLEKYSQGRLGVALINTEDNSQITYRGEERFAMASTSKVMAVAAILKESEKQAGLLDKNIIITKSDLVAYSPITEKHLATGMSLAQLSAATLQYSDNTAMNKILDYLGGPSKVTQFARSINDVTYRLDRKEPELNTAIHGDPRDTTSPIAMAKSLQALTLGDALGQSQRQQLVTWLKGNTTGDHSIKAGLPKHWIVGDKTGSGDYGTTNDIAVIWPKNHAPLILVVYFTQQEQDAKYRKDIIVKATEIVTKEFSNTSQKK</sequence>
<reference key="1">
    <citation type="journal article" date="1994" name="Biochim. Biophys. Acta">
        <title>Chromosomally encoded cephalosporin-hydrolyzing beta-lactamase of Proteus vulgaris RO104 belongs to Ambler's class A.</title>
        <authorList>
            <person name="Peduzzi J."/>
            <person name="Reynaud A."/>
            <person name="Barthelemy M."/>
            <person name="Baron P."/>
            <person name="Labia R."/>
        </authorList>
    </citation>
    <scope>PROTEIN SEQUENCE</scope>
    <source>
        <strain>RO104</strain>
    </source>
</reference>
<reference key="2">
    <citation type="journal article" date="1991" name="Biochem. J.">
        <title>A standard numbering scheme for the class A beta-lactamases.</title>
        <authorList>
            <person name="Ambler R.P."/>
            <person name="Coulson A.F."/>
            <person name="Frere J.M."/>
            <person name="Ghuysen J.M."/>
            <person name="Joris B."/>
            <person name="Forsman M."/>
            <person name="Levesque R.C."/>
            <person name="Tiraby G."/>
            <person name="Waley S.G."/>
        </authorList>
    </citation>
    <scope>AMINO ACID NUMBERING SCHEME</scope>
</reference>
<feature type="chain" id="PRO_0000195441" description="Beta-lactamase">
    <location>
        <begin position="1"/>
        <end position="271"/>
    </location>
</feature>
<feature type="active site" description="Acyl-ester intermediate" evidence="2">
    <location>
        <position position="46"/>
    </location>
</feature>
<feature type="binding site" evidence="1">
    <location>
        <begin position="210"/>
        <end position="212"/>
    </location>
    <ligand>
        <name>substrate</name>
    </ligand>
</feature>